<protein>
    <recommendedName>
        <fullName evidence="1">Phosphoribosylaminoimidazole-succinocarboxamide synthase</fullName>
        <ecNumber evidence="1">6.3.2.6</ecNumber>
    </recommendedName>
    <alternativeName>
        <fullName evidence="1">SAICAR synthetase</fullName>
    </alternativeName>
</protein>
<name>PUR7_COLP3</name>
<accession>Q480B3</accession>
<reference key="1">
    <citation type="journal article" date="2005" name="Proc. Natl. Acad. Sci. U.S.A.">
        <title>The psychrophilic lifestyle as revealed by the genome sequence of Colwellia psychrerythraea 34H through genomic and proteomic analyses.</title>
        <authorList>
            <person name="Methe B.A."/>
            <person name="Nelson K.E."/>
            <person name="Deming J.W."/>
            <person name="Momen B."/>
            <person name="Melamud E."/>
            <person name="Zhang X."/>
            <person name="Moult J."/>
            <person name="Madupu R."/>
            <person name="Nelson W.C."/>
            <person name="Dodson R.J."/>
            <person name="Brinkac L.M."/>
            <person name="Daugherty S.C."/>
            <person name="Durkin A.S."/>
            <person name="DeBoy R.T."/>
            <person name="Kolonay J.F."/>
            <person name="Sullivan S.A."/>
            <person name="Zhou L."/>
            <person name="Davidsen T.M."/>
            <person name="Wu M."/>
            <person name="Huston A.L."/>
            <person name="Lewis M."/>
            <person name="Weaver B."/>
            <person name="Weidman J.F."/>
            <person name="Khouri H."/>
            <person name="Utterback T.R."/>
            <person name="Feldblyum T.V."/>
            <person name="Fraser C.M."/>
        </authorList>
    </citation>
    <scope>NUCLEOTIDE SEQUENCE [LARGE SCALE GENOMIC DNA]</scope>
    <source>
        <strain>34H / ATCC BAA-681</strain>
    </source>
</reference>
<sequence length="367" mass="41261">MNLADKVLAVNNDLPIRTDSPVHSGKVRSVYWLTATDSKRLIEEKGYDVPSDTSLAIMVISDRISAFDCIWSGENDMRGVPGKGAALNAISNHWFKMFKEQGLADSHILDIPHPFVWIVQKAKPVMIEAICRQYITGSMWRSYTKGERDFCGIELPEGLAKDSKLTSLLQTPSTKGILEGIPGVPAVDDVNITRKNIEDNFEAFNFKSVDDIARYEKLLTEGFDVISTALSKIDQVFVDTKFEFGYVKDVNGDDKLIYMDEVGTPDSSRIWDGEQYRAGKVVENSKEGFRQLLLNHFPDADILLNKDRMSEREALARDNKLPLSVLMDVSKTYTDIAEKITGNKIVLSDNPKAEIIAILREQYQLID</sequence>
<evidence type="ECO:0000255" key="1">
    <source>
        <dbReference type="HAMAP-Rule" id="MF_00137"/>
    </source>
</evidence>
<feature type="chain" id="PRO_1000117829" description="Phosphoribosylaminoimidazole-succinocarboxamide synthase">
    <location>
        <begin position="1"/>
        <end position="367"/>
    </location>
</feature>
<comment type="catalytic activity">
    <reaction evidence="1">
        <text>5-amino-1-(5-phospho-D-ribosyl)imidazole-4-carboxylate + L-aspartate + ATP = (2S)-2-[5-amino-1-(5-phospho-beta-D-ribosyl)imidazole-4-carboxamido]succinate + ADP + phosphate + 2 H(+)</text>
        <dbReference type="Rhea" id="RHEA:22628"/>
        <dbReference type="ChEBI" id="CHEBI:15378"/>
        <dbReference type="ChEBI" id="CHEBI:29991"/>
        <dbReference type="ChEBI" id="CHEBI:30616"/>
        <dbReference type="ChEBI" id="CHEBI:43474"/>
        <dbReference type="ChEBI" id="CHEBI:58443"/>
        <dbReference type="ChEBI" id="CHEBI:77657"/>
        <dbReference type="ChEBI" id="CHEBI:456216"/>
        <dbReference type="EC" id="6.3.2.6"/>
    </reaction>
</comment>
<comment type="pathway">
    <text evidence="1">Purine metabolism; IMP biosynthesis via de novo pathway; 5-amino-1-(5-phospho-D-ribosyl)imidazole-4-carboxamide from 5-amino-1-(5-phospho-D-ribosyl)imidazole-4-carboxylate: step 1/2.</text>
</comment>
<comment type="similarity">
    <text evidence="1">Belongs to the SAICAR synthetase family.</text>
</comment>
<gene>
    <name evidence="1" type="primary">purC</name>
    <name type="ordered locus">CPS_2905</name>
</gene>
<dbReference type="EC" id="6.3.2.6" evidence="1"/>
<dbReference type="EMBL" id="CP000083">
    <property type="protein sequence ID" value="AAZ24402.1"/>
    <property type="molecule type" value="Genomic_DNA"/>
</dbReference>
<dbReference type="RefSeq" id="WP_011043698.1">
    <property type="nucleotide sequence ID" value="NC_003910.7"/>
</dbReference>
<dbReference type="SMR" id="Q480B3"/>
<dbReference type="STRING" id="167879.CPS_2905"/>
<dbReference type="KEGG" id="cps:CPS_2905"/>
<dbReference type="eggNOG" id="COG0152">
    <property type="taxonomic scope" value="Bacteria"/>
</dbReference>
<dbReference type="HOGENOM" id="CLU_064197_0_0_6"/>
<dbReference type="UniPathway" id="UPA00074">
    <property type="reaction ID" value="UER00131"/>
</dbReference>
<dbReference type="Proteomes" id="UP000000547">
    <property type="component" value="Chromosome"/>
</dbReference>
<dbReference type="GO" id="GO:0005737">
    <property type="term" value="C:cytoplasm"/>
    <property type="evidence" value="ECO:0007669"/>
    <property type="project" value="TreeGrafter"/>
</dbReference>
<dbReference type="GO" id="GO:0005524">
    <property type="term" value="F:ATP binding"/>
    <property type="evidence" value="ECO:0007669"/>
    <property type="project" value="UniProtKB-KW"/>
</dbReference>
<dbReference type="GO" id="GO:0004639">
    <property type="term" value="F:phosphoribosylaminoimidazolesuccinocarboxamide synthase activity"/>
    <property type="evidence" value="ECO:0007669"/>
    <property type="project" value="UniProtKB-UniRule"/>
</dbReference>
<dbReference type="GO" id="GO:0006189">
    <property type="term" value="P:'de novo' IMP biosynthetic process"/>
    <property type="evidence" value="ECO:0007669"/>
    <property type="project" value="UniProtKB-UniRule"/>
</dbReference>
<dbReference type="CDD" id="cd01414">
    <property type="entry name" value="SAICAR_synt_Sc"/>
    <property type="match status" value="1"/>
</dbReference>
<dbReference type="Gene3D" id="3.30.470.20">
    <property type="entry name" value="ATP-grasp fold, B domain"/>
    <property type="match status" value="1"/>
</dbReference>
<dbReference type="Gene3D" id="3.30.200.20">
    <property type="entry name" value="Phosphorylase Kinase, domain 1"/>
    <property type="match status" value="1"/>
</dbReference>
<dbReference type="HAMAP" id="MF_00137">
    <property type="entry name" value="SAICAR_synth"/>
    <property type="match status" value="1"/>
</dbReference>
<dbReference type="InterPro" id="IPR028923">
    <property type="entry name" value="SAICAR_synt/ADE2_N"/>
</dbReference>
<dbReference type="InterPro" id="IPR014106">
    <property type="entry name" value="SAICAR_synthase_Vibrio-typ"/>
</dbReference>
<dbReference type="NCBIfam" id="NF010567">
    <property type="entry name" value="PRK13960.1"/>
    <property type="match status" value="1"/>
</dbReference>
<dbReference type="NCBIfam" id="TIGR02735">
    <property type="entry name" value="purC_vibrio"/>
    <property type="match status" value="1"/>
</dbReference>
<dbReference type="PANTHER" id="PTHR43700">
    <property type="entry name" value="PHOSPHORIBOSYLAMINOIMIDAZOLE-SUCCINOCARBOXAMIDE SYNTHASE"/>
    <property type="match status" value="1"/>
</dbReference>
<dbReference type="PANTHER" id="PTHR43700:SF1">
    <property type="entry name" value="PHOSPHORIBOSYLAMINOIMIDAZOLE-SUCCINOCARBOXAMIDE SYNTHASE"/>
    <property type="match status" value="1"/>
</dbReference>
<dbReference type="Pfam" id="PF01259">
    <property type="entry name" value="SAICAR_synt"/>
    <property type="match status" value="1"/>
</dbReference>
<dbReference type="SUPFAM" id="SSF56104">
    <property type="entry name" value="SAICAR synthase-like"/>
    <property type="match status" value="1"/>
</dbReference>
<organism>
    <name type="scientific">Colwellia psychrerythraea (strain 34H / ATCC BAA-681)</name>
    <name type="common">Vibrio psychroerythus</name>
    <dbReference type="NCBI Taxonomy" id="167879"/>
    <lineage>
        <taxon>Bacteria</taxon>
        <taxon>Pseudomonadati</taxon>
        <taxon>Pseudomonadota</taxon>
        <taxon>Gammaproteobacteria</taxon>
        <taxon>Alteromonadales</taxon>
        <taxon>Colwelliaceae</taxon>
        <taxon>Colwellia</taxon>
    </lineage>
</organism>
<keyword id="KW-0067">ATP-binding</keyword>
<keyword id="KW-0436">Ligase</keyword>
<keyword id="KW-0547">Nucleotide-binding</keyword>
<keyword id="KW-0658">Purine biosynthesis</keyword>
<proteinExistence type="inferred from homology"/>